<reference key="1">
    <citation type="journal article" date="2013" name="Front. Microbiol.">
        <title>The genome of Nitrospina gracilis illuminates the metabolism and evolution of the major marine nitrite oxidizer.</title>
        <authorList>
            <person name="Luecker S."/>
            <person name="Nowka B."/>
            <person name="Rattei T."/>
            <person name="Spieck E."/>
            <person name="Daims H."/>
        </authorList>
    </citation>
    <scope>NUCLEOTIDE SEQUENCE [LARGE SCALE GENOMIC DNA]</scope>
    <source>
        <strain>3/211</strain>
    </source>
</reference>
<reference key="2">
    <citation type="journal article" date="2017" name="Biochem. Biophys. Res. Commun.">
        <title>Identification of UBact, a ubiquitin-like protein, along with other homologous components of a conjugation system and the proteasome in different gram-negative bacteria.</title>
        <authorList>
            <person name="Lehmann G."/>
            <person name="Udasin R.G."/>
            <person name="Livneh I."/>
            <person name="Ciechanover A."/>
        </authorList>
    </citation>
    <scope>PREDICTED FUNCTION</scope>
    <scope>DEAMIDATION AT GLN-59</scope>
    <source>
        <strain>3/211</strain>
    </source>
</reference>
<accession>M1YW29</accession>
<feature type="chain" id="PRO_0000441764" description="Prokaryotic ubiquitin-like protein UBact">
    <location>
        <begin position="1"/>
        <end position="59"/>
    </location>
</feature>
<feature type="region of interest" description="Disordered" evidence="2">
    <location>
        <begin position="1"/>
        <end position="59"/>
    </location>
</feature>
<feature type="modified residue" description="Deamidated glutamine" evidence="5">
    <location>
        <position position="59"/>
    </location>
</feature>
<feature type="cross-link" description="Isoglutamyl lysine isopeptide (Gln-Lys) (interchain with K-? in acceptor proteins)" evidence="5">
    <location>
        <position position="59"/>
    </location>
</feature>
<evidence type="ECO:0000255" key="1">
    <source>
        <dbReference type="HAMAP-Rule" id="MF_02133"/>
    </source>
</evidence>
<evidence type="ECO:0000256" key="2">
    <source>
        <dbReference type="SAM" id="MobiDB-lite"/>
    </source>
</evidence>
<evidence type="ECO:0000303" key="3">
    <source>
    </source>
</evidence>
<evidence type="ECO:0000305" key="4"/>
<evidence type="ECO:0000305" key="5">
    <source>
    </source>
</evidence>
<evidence type="ECO:0000312" key="6">
    <source>
        <dbReference type="EMBL" id="CCQ89855.1"/>
    </source>
</evidence>
<gene>
    <name evidence="3" type="primary">ubact</name>
    <name evidence="6" type="ORF">NITGR_170112</name>
</gene>
<name>UBACT_NITG3</name>
<comment type="function">
    <text evidence="5">May function as a protein modifier covalently attached to lysine residues of substrate proteins. This may serve to target the modified proteins for degradation by proteasomes.</text>
</comment>
<comment type="PTM">
    <text evidence="4">May be modified by deamidation of its C-terminal glutamine to glutamate by the adjacently encoded deamidase. This could be a prerequisite to the subsequent conjugation, as shown in the other prokaryotic ubiquitin-like protein Pup.</text>
</comment>
<comment type="similarity">
    <text evidence="1">Belongs to the ubiquitin-like protein UBact family.</text>
</comment>
<sequence length="59" mass="6886">MEMTDPLRREEKKESSPDPKEESGPSRPDVSRPGRDSLLKRMKKVDPKQSEKYKQRTGQ</sequence>
<protein>
    <recommendedName>
        <fullName evidence="3">Prokaryotic ubiquitin-like protein UBact</fullName>
    </recommendedName>
</protein>
<organism>
    <name type="scientific">Nitrospina gracilis (strain 3/211)</name>
    <dbReference type="NCBI Taxonomy" id="1266370"/>
    <lineage>
        <taxon>Bacteria</taxon>
        <taxon>Pseudomonadati</taxon>
        <taxon>Nitrospinota/Tectimicrobiota group</taxon>
        <taxon>Nitrospinota</taxon>
        <taxon>Nitrospinia</taxon>
        <taxon>Nitrospinales</taxon>
        <taxon>Nitrospinaceae</taxon>
        <taxon>Nitrospina</taxon>
    </lineage>
</organism>
<dbReference type="EMBL" id="HG422173">
    <property type="protein sequence ID" value="CCQ89855.1"/>
    <property type="molecule type" value="Genomic_DNA"/>
</dbReference>
<dbReference type="RefSeq" id="WP_005006709.1">
    <property type="nucleotide sequence ID" value="NZ_HG422173.1"/>
</dbReference>
<dbReference type="SMR" id="M1YW29"/>
<dbReference type="STRING" id="1266370.NITGR_170112"/>
<dbReference type="HOGENOM" id="CLU_207029_0_0_0"/>
<dbReference type="InParanoid" id="M1YW29"/>
<dbReference type="OrthoDB" id="9804911at2"/>
<dbReference type="Proteomes" id="UP000011704">
    <property type="component" value="Unassembled WGS sequence"/>
</dbReference>
<dbReference type="GO" id="GO:0031386">
    <property type="term" value="F:protein tag activity"/>
    <property type="evidence" value="ECO:0007669"/>
    <property type="project" value="UniProtKB-UniRule"/>
</dbReference>
<dbReference type="HAMAP" id="MF_02133">
    <property type="entry name" value="UBact"/>
    <property type="match status" value="1"/>
</dbReference>
<dbReference type="InterPro" id="IPR037543">
    <property type="entry name" value="UBact"/>
</dbReference>
<dbReference type="NCBIfam" id="NF033388">
    <property type="entry name" value="ubiq_like_UBact"/>
    <property type="match status" value="1"/>
</dbReference>
<dbReference type="Pfam" id="PF20513">
    <property type="entry name" value="UBact"/>
    <property type="match status" value="1"/>
</dbReference>
<keyword id="KW-1017">Isopeptide bond</keyword>
<keyword id="KW-1185">Reference proteome</keyword>
<keyword id="KW-0833">Ubl conjugation pathway</keyword>
<proteinExistence type="evidence at protein level"/>